<dbReference type="EC" id="1.2.1.70" evidence="1"/>
<dbReference type="EMBL" id="CP000686">
    <property type="protein sequence ID" value="ABQ90136.1"/>
    <property type="molecule type" value="Genomic_DNA"/>
</dbReference>
<dbReference type="RefSeq" id="WP_011956483.1">
    <property type="nucleotide sequence ID" value="NC_009523.1"/>
</dbReference>
<dbReference type="SMR" id="A5UU33"/>
<dbReference type="STRING" id="357808.RoseRS_1746"/>
<dbReference type="KEGG" id="rrs:RoseRS_1746"/>
<dbReference type="eggNOG" id="COG0373">
    <property type="taxonomic scope" value="Bacteria"/>
</dbReference>
<dbReference type="HOGENOM" id="CLU_035113_2_2_0"/>
<dbReference type="OrthoDB" id="110209at2"/>
<dbReference type="UniPathway" id="UPA00251">
    <property type="reaction ID" value="UER00316"/>
</dbReference>
<dbReference type="UniPathway" id="UPA00668"/>
<dbReference type="Proteomes" id="UP000006554">
    <property type="component" value="Chromosome"/>
</dbReference>
<dbReference type="GO" id="GO:0008883">
    <property type="term" value="F:glutamyl-tRNA reductase activity"/>
    <property type="evidence" value="ECO:0007669"/>
    <property type="project" value="UniProtKB-UniRule"/>
</dbReference>
<dbReference type="GO" id="GO:0050661">
    <property type="term" value="F:NADP binding"/>
    <property type="evidence" value="ECO:0007669"/>
    <property type="project" value="InterPro"/>
</dbReference>
<dbReference type="GO" id="GO:0015995">
    <property type="term" value="P:chlorophyll biosynthetic process"/>
    <property type="evidence" value="ECO:0007669"/>
    <property type="project" value="UniProtKB-UniRule"/>
</dbReference>
<dbReference type="GO" id="GO:0019353">
    <property type="term" value="P:protoporphyrinogen IX biosynthetic process from glutamate"/>
    <property type="evidence" value="ECO:0007669"/>
    <property type="project" value="TreeGrafter"/>
</dbReference>
<dbReference type="CDD" id="cd05213">
    <property type="entry name" value="NAD_bind_Glutamyl_tRNA_reduct"/>
    <property type="match status" value="1"/>
</dbReference>
<dbReference type="FunFam" id="3.30.460.30:FF:000001">
    <property type="entry name" value="Glutamyl-tRNA reductase"/>
    <property type="match status" value="1"/>
</dbReference>
<dbReference type="FunFam" id="3.40.50.720:FF:000031">
    <property type="entry name" value="Glutamyl-tRNA reductase"/>
    <property type="match status" value="1"/>
</dbReference>
<dbReference type="Gene3D" id="3.30.460.30">
    <property type="entry name" value="Glutamyl-tRNA reductase, N-terminal domain"/>
    <property type="match status" value="1"/>
</dbReference>
<dbReference type="Gene3D" id="3.40.50.720">
    <property type="entry name" value="NAD(P)-binding Rossmann-like Domain"/>
    <property type="match status" value="1"/>
</dbReference>
<dbReference type="HAMAP" id="MF_00087">
    <property type="entry name" value="Glu_tRNA_reductase"/>
    <property type="match status" value="1"/>
</dbReference>
<dbReference type="InterPro" id="IPR000343">
    <property type="entry name" value="4pyrrol_synth_GluRdtase"/>
</dbReference>
<dbReference type="InterPro" id="IPR015896">
    <property type="entry name" value="4pyrrol_synth_GluRdtase_dimer"/>
</dbReference>
<dbReference type="InterPro" id="IPR015895">
    <property type="entry name" value="4pyrrol_synth_GluRdtase_N"/>
</dbReference>
<dbReference type="InterPro" id="IPR018214">
    <property type="entry name" value="GluRdtase_CS"/>
</dbReference>
<dbReference type="InterPro" id="IPR036453">
    <property type="entry name" value="GluRdtase_dimer_dom_sf"/>
</dbReference>
<dbReference type="InterPro" id="IPR036343">
    <property type="entry name" value="GluRdtase_N_sf"/>
</dbReference>
<dbReference type="InterPro" id="IPR036291">
    <property type="entry name" value="NAD(P)-bd_dom_sf"/>
</dbReference>
<dbReference type="InterPro" id="IPR006151">
    <property type="entry name" value="Shikm_DH/Glu-tRNA_Rdtase"/>
</dbReference>
<dbReference type="NCBIfam" id="TIGR01035">
    <property type="entry name" value="hemA"/>
    <property type="match status" value="1"/>
</dbReference>
<dbReference type="PANTHER" id="PTHR43013">
    <property type="entry name" value="GLUTAMYL-TRNA REDUCTASE"/>
    <property type="match status" value="1"/>
</dbReference>
<dbReference type="PANTHER" id="PTHR43013:SF1">
    <property type="entry name" value="GLUTAMYL-TRNA REDUCTASE"/>
    <property type="match status" value="1"/>
</dbReference>
<dbReference type="Pfam" id="PF00745">
    <property type="entry name" value="GlutR_dimer"/>
    <property type="match status" value="1"/>
</dbReference>
<dbReference type="Pfam" id="PF05201">
    <property type="entry name" value="GlutR_N"/>
    <property type="match status" value="1"/>
</dbReference>
<dbReference type="Pfam" id="PF01488">
    <property type="entry name" value="Shikimate_DH"/>
    <property type="match status" value="1"/>
</dbReference>
<dbReference type="PIRSF" id="PIRSF000445">
    <property type="entry name" value="4pyrrol_synth_GluRdtase"/>
    <property type="match status" value="1"/>
</dbReference>
<dbReference type="SUPFAM" id="SSF69742">
    <property type="entry name" value="Glutamyl tRNA-reductase catalytic, N-terminal domain"/>
    <property type="match status" value="1"/>
</dbReference>
<dbReference type="SUPFAM" id="SSF69075">
    <property type="entry name" value="Glutamyl tRNA-reductase dimerization domain"/>
    <property type="match status" value="1"/>
</dbReference>
<dbReference type="SUPFAM" id="SSF51735">
    <property type="entry name" value="NAD(P)-binding Rossmann-fold domains"/>
    <property type="match status" value="1"/>
</dbReference>
<dbReference type="PROSITE" id="PS00747">
    <property type="entry name" value="GLUTR"/>
    <property type="match status" value="1"/>
</dbReference>
<comment type="function">
    <text evidence="1">Catalyzes the NADPH-dependent reduction of glutamyl-tRNA(Glu) to glutamate 1-semialdehyde (GSA).</text>
</comment>
<comment type="catalytic activity">
    <reaction evidence="1">
        <text>(S)-4-amino-5-oxopentanoate + tRNA(Glu) + NADP(+) = L-glutamyl-tRNA(Glu) + NADPH + H(+)</text>
        <dbReference type="Rhea" id="RHEA:12344"/>
        <dbReference type="Rhea" id="RHEA-COMP:9663"/>
        <dbReference type="Rhea" id="RHEA-COMP:9680"/>
        <dbReference type="ChEBI" id="CHEBI:15378"/>
        <dbReference type="ChEBI" id="CHEBI:57501"/>
        <dbReference type="ChEBI" id="CHEBI:57783"/>
        <dbReference type="ChEBI" id="CHEBI:58349"/>
        <dbReference type="ChEBI" id="CHEBI:78442"/>
        <dbReference type="ChEBI" id="CHEBI:78520"/>
        <dbReference type="EC" id="1.2.1.70"/>
    </reaction>
</comment>
<comment type="pathway">
    <text evidence="1">Porphyrin-containing compound metabolism; protoporphyrin-IX biosynthesis; 5-aminolevulinate from L-glutamyl-tRNA(Glu): step 1/2.</text>
</comment>
<comment type="pathway">
    <text evidence="1">Porphyrin-containing compound metabolism; chlorophyll biosynthesis.</text>
</comment>
<comment type="subunit">
    <text evidence="1">Homodimer.</text>
</comment>
<comment type="domain">
    <text evidence="1">Possesses an unusual extended V-shaped dimeric structure with each monomer consisting of three distinct domains arranged along a curved 'spinal' alpha-helix. The N-terminal catalytic domain specifically recognizes the glutamate moiety of the substrate. The second domain is the NADPH-binding domain, and the third C-terminal domain is responsible for dimerization.</text>
</comment>
<comment type="miscellaneous">
    <text evidence="1">During catalysis, the active site Cys acts as a nucleophile attacking the alpha-carbonyl group of tRNA-bound glutamate with the formation of a thioester intermediate between enzyme and glutamate, and the concomitant release of tRNA(Glu). The thioester intermediate is finally reduced by direct hydride transfer from NADPH, to form the product GSA.</text>
</comment>
<comment type="similarity">
    <text evidence="1">Belongs to the glutamyl-tRNA reductase family.</text>
</comment>
<proteinExistence type="inferred from homology"/>
<organism>
    <name type="scientific">Roseiflexus sp. (strain RS-1)</name>
    <dbReference type="NCBI Taxonomy" id="357808"/>
    <lineage>
        <taxon>Bacteria</taxon>
        <taxon>Bacillati</taxon>
        <taxon>Chloroflexota</taxon>
        <taxon>Chloroflexia</taxon>
        <taxon>Chloroflexales</taxon>
        <taxon>Roseiflexineae</taxon>
        <taxon>Roseiflexaceae</taxon>
        <taxon>Roseiflexus</taxon>
    </lineage>
</organism>
<protein>
    <recommendedName>
        <fullName evidence="1">Glutamyl-tRNA reductase</fullName>
        <shortName evidence="1">GluTR</shortName>
        <ecNumber evidence="1">1.2.1.70</ecNumber>
    </recommendedName>
</protein>
<accession>A5UU33</accession>
<gene>
    <name evidence="1" type="primary">hemA</name>
    <name type="ordered locus">RoseRS_1746</name>
</gene>
<feature type="chain" id="PRO_1000004680" description="Glutamyl-tRNA reductase">
    <location>
        <begin position="1"/>
        <end position="425"/>
    </location>
</feature>
<feature type="active site" description="Nucleophile" evidence="1">
    <location>
        <position position="48"/>
    </location>
</feature>
<feature type="binding site" evidence="1">
    <location>
        <begin position="47"/>
        <end position="50"/>
    </location>
    <ligand>
        <name>substrate</name>
    </ligand>
</feature>
<feature type="binding site" evidence="1">
    <location>
        <position position="107"/>
    </location>
    <ligand>
        <name>substrate</name>
    </ligand>
</feature>
<feature type="binding site" evidence="1">
    <location>
        <begin position="112"/>
        <end position="114"/>
    </location>
    <ligand>
        <name>substrate</name>
    </ligand>
</feature>
<feature type="binding site" evidence="1">
    <location>
        <position position="118"/>
    </location>
    <ligand>
        <name>substrate</name>
    </ligand>
</feature>
<feature type="binding site" evidence="1">
    <location>
        <begin position="187"/>
        <end position="192"/>
    </location>
    <ligand>
        <name>NADP(+)</name>
        <dbReference type="ChEBI" id="CHEBI:58349"/>
    </ligand>
</feature>
<feature type="site" description="Important for activity" evidence="1">
    <location>
        <position position="97"/>
    </location>
</feature>
<evidence type="ECO:0000255" key="1">
    <source>
        <dbReference type="HAMAP-Rule" id="MF_00087"/>
    </source>
</evidence>
<name>HEM1_ROSS1</name>
<keyword id="KW-0149">Chlorophyll biosynthesis</keyword>
<keyword id="KW-0521">NADP</keyword>
<keyword id="KW-0560">Oxidoreductase</keyword>
<keyword id="KW-0627">Porphyrin biosynthesis</keyword>
<reference key="1">
    <citation type="submission" date="2007-04" db="EMBL/GenBank/DDBJ databases">
        <title>Complete sequence of Roseiflexus sp. RS-1.</title>
        <authorList>
            <consortium name="US DOE Joint Genome Institute"/>
            <person name="Copeland A."/>
            <person name="Lucas S."/>
            <person name="Lapidus A."/>
            <person name="Barry K."/>
            <person name="Detter J.C."/>
            <person name="Glavina del Rio T."/>
            <person name="Hammon N."/>
            <person name="Israni S."/>
            <person name="Dalin E."/>
            <person name="Tice H."/>
            <person name="Pitluck S."/>
            <person name="Chertkov O."/>
            <person name="Brettin T."/>
            <person name="Bruce D."/>
            <person name="Han C."/>
            <person name="Schmutz J."/>
            <person name="Larimer F."/>
            <person name="Land M."/>
            <person name="Hauser L."/>
            <person name="Kyrpides N."/>
            <person name="Mikhailova N."/>
            <person name="Bryant D.A."/>
            <person name="Richardson P."/>
        </authorList>
    </citation>
    <scope>NUCLEOTIDE SEQUENCE [LARGE SCALE GENOMIC DNA]</scope>
    <source>
        <strain>RS-1</strain>
    </source>
</reference>
<sequence length="425" mass="46193">MQITLIGVHQRNTPVTVRERLAFNLYELPDALLALRRYVDEGIILSTCNRVEVCAVTRNGVAGDEALKTFLVEQRGVDQALFAPSLYVYHNEAVVRHLYRLAAGLDSMVLGEDQIVGQVKEALAIAHAAGAIGPVLHRVLHGALAAGKRARTHTGIATGHVSVVSVAIDAMRQYPDLLKRGRALVIGAGHIAELSLKHLLAGGCSAITIVNRTEARADALAQRYGVAWRPWSDLEDALAASDIVVSCTSAPGIVLSQQMVERAAAGRSTPLLLFDLAVPRDIDQGVAEIPGVYLHDVDALEPICRTNRALRAAEAERAETIIEGEVAKFMEWWAVQQAVPTIRALRKRAEDIRDAEIRRALARCPELSPQQRETVIALSTAIINKLLHEPIVALRDPEASGELLTAVRRLFNIDDTAVYTSANMT</sequence>